<name>RS7_CLOBK</name>
<evidence type="ECO:0000255" key="1">
    <source>
        <dbReference type="HAMAP-Rule" id="MF_00480"/>
    </source>
</evidence>
<evidence type="ECO:0000305" key="2"/>
<keyword id="KW-0687">Ribonucleoprotein</keyword>
<keyword id="KW-0689">Ribosomal protein</keyword>
<keyword id="KW-0694">RNA-binding</keyword>
<keyword id="KW-0699">rRNA-binding</keyword>
<keyword id="KW-0820">tRNA-binding</keyword>
<feature type="chain" id="PRO_1000125920" description="Small ribosomal subunit protein uS7">
    <location>
        <begin position="1"/>
        <end position="156"/>
    </location>
</feature>
<comment type="function">
    <text evidence="1">One of the primary rRNA binding proteins, it binds directly to 16S rRNA where it nucleates assembly of the head domain of the 30S subunit. Is located at the subunit interface close to the decoding center, probably blocks exit of the E-site tRNA.</text>
</comment>
<comment type="subunit">
    <text evidence="1">Part of the 30S ribosomal subunit. Contacts proteins S9 and S11.</text>
</comment>
<comment type="similarity">
    <text evidence="1">Belongs to the universal ribosomal protein uS7 family.</text>
</comment>
<sequence length="156" mass="17700">MPRKGHIAKRDVLPDPLYNSKVVTKLINSIMLDGKRGVAQKICYDAFEIIGEKSGKDAMEVFETAMNNIMPLLEVKARRIGGATYQVPIEVRPERRQTLGIRWMLIAARKRGERSMRERLAGELLDASNNTGAAVKKREDTHKMAEANKAFAHYRY</sequence>
<protein>
    <recommendedName>
        <fullName evidence="1">Small ribosomal subunit protein uS7</fullName>
    </recommendedName>
    <alternativeName>
        <fullName evidence="2">30S ribosomal protein S7</fullName>
    </alternativeName>
</protein>
<reference key="1">
    <citation type="journal article" date="2007" name="PLoS ONE">
        <title>Analysis of the neurotoxin complex genes in Clostridium botulinum A1-A4 and B1 strains: BoNT/A3, /Ba4 and /B1 clusters are located within plasmids.</title>
        <authorList>
            <person name="Smith T.J."/>
            <person name="Hill K.K."/>
            <person name="Foley B.T."/>
            <person name="Detter J.C."/>
            <person name="Munk A.C."/>
            <person name="Bruce D.C."/>
            <person name="Doggett N.A."/>
            <person name="Smith L.A."/>
            <person name="Marks J.D."/>
            <person name="Xie G."/>
            <person name="Brettin T.S."/>
        </authorList>
    </citation>
    <scope>NUCLEOTIDE SEQUENCE [LARGE SCALE GENOMIC DNA]</scope>
    <source>
        <strain>Okra / Type B1</strain>
    </source>
</reference>
<dbReference type="EMBL" id="CP000939">
    <property type="protein sequence ID" value="ACA44445.1"/>
    <property type="molecule type" value="Genomic_DNA"/>
</dbReference>
<dbReference type="RefSeq" id="WP_003402983.1">
    <property type="nucleotide sequence ID" value="NC_010516.1"/>
</dbReference>
<dbReference type="SMR" id="B1IGF8"/>
<dbReference type="KEGG" id="cbb:CLD_1020"/>
<dbReference type="HOGENOM" id="CLU_072226_1_1_9"/>
<dbReference type="Proteomes" id="UP000008541">
    <property type="component" value="Chromosome"/>
</dbReference>
<dbReference type="GO" id="GO:0015935">
    <property type="term" value="C:small ribosomal subunit"/>
    <property type="evidence" value="ECO:0007669"/>
    <property type="project" value="InterPro"/>
</dbReference>
<dbReference type="GO" id="GO:0019843">
    <property type="term" value="F:rRNA binding"/>
    <property type="evidence" value="ECO:0007669"/>
    <property type="project" value="UniProtKB-UniRule"/>
</dbReference>
<dbReference type="GO" id="GO:0003735">
    <property type="term" value="F:structural constituent of ribosome"/>
    <property type="evidence" value="ECO:0007669"/>
    <property type="project" value="InterPro"/>
</dbReference>
<dbReference type="GO" id="GO:0000049">
    <property type="term" value="F:tRNA binding"/>
    <property type="evidence" value="ECO:0007669"/>
    <property type="project" value="UniProtKB-UniRule"/>
</dbReference>
<dbReference type="GO" id="GO:0006412">
    <property type="term" value="P:translation"/>
    <property type="evidence" value="ECO:0007669"/>
    <property type="project" value="UniProtKB-UniRule"/>
</dbReference>
<dbReference type="CDD" id="cd14869">
    <property type="entry name" value="uS7_Bacteria"/>
    <property type="match status" value="1"/>
</dbReference>
<dbReference type="FunFam" id="1.10.455.10:FF:000001">
    <property type="entry name" value="30S ribosomal protein S7"/>
    <property type="match status" value="1"/>
</dbReference>
<dbReference type="Gene3D" id="1.10.455.10">
    <property type="entry name" value="Ribosomal protein S7 domain"/>
    <property type="match status" value="1"/>
</dbReference>
<dbReference type="HAMAP" id="MF_00480_B">
    <property type="entry name" value="Ribosomal_uS7_B"/>
    <property type="match status" value="1"/>
</dbReference>
<dbReference type="InterPro" id="IPR000235">
    <property type="entry name" value="Ribosomal_uS7"/>
</dbReference>
<dbReference type="InterPro" id="IPR005717">
    <property type="entry name" value="Ribosomal_uS7_bac/org-type"/>
</dbReference>
<dbReference type="InterPro" id="IPR020606">
    <property type="entry name" value="Ribosomal_uS7_CS"/>
</dbReference>
<dbReference type="InterPro" id="IPR023798">
    <property type="entry name" value="Ribosomal_uS7_dom"/>
</dbReference>
<dbReference type="InterPro" id="IPR036823">
    <property type="entry name" value="Ribosomal_uS7_dom_sf"/>
</dbReference>
<dbReference type="NCBIfam" id="TIGR01029">
    <property type="entry name" value="rpsG_bact"/>
    <property type="match status" value="1"/>
</dbReference>
<dbReference type="PANTHER" id="PTHR11205">
    <property type="entry name" value="RIBOSOMAL PROTEIN S7"/>
    <property type="match status" value="1"/>
</dbReference>
<dbReference type="Pfam" id="PF00177">
    <property type="entry name" value="Ribosomal_S7"/>
    <property type="match status" value="1"/>
</dbReference>
<dbReference type="PIRSF" id="PIRSF002122">
    <property type="entry name" value="RPS7p_RPS7a_RPS5e_RPS7o"/>
    <property type="match status" value="1"/>
</dbReference>
<dbReference type="SUPFAM" id="SSF47973">
    <property type="entry name" value="Ribosomal protein S7"/>
    <property type="match status" value="1"/>
</dbReference>
<dbReference type="PROSITE" id="PS00052">
    <property type="entry name" value="RIBOSOMAL_S7"/>
    <property type="match status" value="1"/>
</dbReference>
<accession>B1IGF8</accession>
<proteinExistence type="inferred from homology"/>
<organism>
    <name type="scientific">Clostridium botulinum (strain Okra / Type B1)</name>
    <dbReference type="NCBI Taxonomy" id="498213"/>
    <lineage>
        <taxon>Bacteria</taxon>
        <taxon>Bacillati</taxon>
        <taxon>Bacillota</taxon>
        <taxon>Clostridia</taxon>
        <taxon>Eubacteriales</taxon>
        <taxon>Clostridiaceae</taxon>
        <taxon>Clostridium</taxon>
    </lineage>
</organism>
<gene>
    <name evidence="1" type="primary">rpsG</name>
    <name type="ordered locus">CLD_1020</name>
</gene>